<sequence>MTTTTTFKGVDPNSRNSSRVLRPPGGGSNFSLGFDEPTEQPVRKNKMASNIFGTPEENQASWAKSAGAKSSGGREDLESSGLQRRNSSEASSGDFLDLKGEGDIHENVDTDLPGSLGQSEEKPVPAAPVPSPVAPAPVPSRRNPPGGKSSLVLG</sequence>
<dbReference type="EMBL" id="AF086910">
    <property type="protein sequence ID" value="AAP97140.1"/>
    <property type="molecule type" value="mRNA"/>
</dbReference>
<dbReference type="EMBL" id="AY322169">
    <property type="protein sequence ID" value="AAP83838.1"/>
    <property type="molecule type" value="mRNA"/>
</dbReference>
<dbReference type="EMBL" id="AY322170">
    <property type="protein sequence ID" value="AAP83839.1"/>
    <property type="molecule type" value="mRNA"/>
</dbReference>
<dbReference type="EMBL" id="AF348672">
    <property type="protein sequence ID" value="AAL83903.1"/>
    <property type="molecule type" value="Genomic_DNA"/>
</dbReference>
<dbReference type="EMBL" id="AF348672">
    <property type="protein sequence ID" value="AAP83962.1"/>
    <property type="molecule type" value="Genomic_DNA"/>
</dbReference>
<dbReference type="EMBL" id="AF348672">
    <property type="protein sequence ID" value="AAP83963.1"/>
    <property type="molecule type" value="Genomic_DNA"/>
</dbReference>
<dbReference type="EMBL" id="AF177862">
    <property type="protein sequence ID" value="AAD53312.1"/>
    <property type="molecule type" value="mRNA"/>
</dbReference>
<dbReference type="EMBL" id="AF266846">
    <property type="protein sequence ID" value="AAQ14298.1"/>
    <property type="molecule type" value="mRNA"/>
</dbReference>
<dbReference type="EMBL" id="AF266847">
    <property type="protein sequence ID" value="AAQ14299.1"/>
    <property type="molecule type" value="Genomic_DNA"/>
</dbReference>
<dbReference type="EMBL" id="AK223321">
    <property type="protein sequence ID" value="BAD97041.1"/>
    <property type="molecule type" value="mRNA"/>
</dbReference>
<dbReference type="EMBL" id="AK312613">
    <property type="protein sequence ID" value="BAG35500.1"/>
    <property type="molecule type" value="mRNA"/>
</dbReference>
<dbReference type="EMBL" id="CH471099">
    <property type="protein sequence ID" value="EAW89244.1"/>
    <property type="molecule type" value="Genomic_DNA"/>
</dbReference>
<dbReference type="EMBL" id="BC001420">
    <property type="protein sequence ID" value="AAH01420.1"/>
    <property type="molecule type" value="mRNA"/>
</dbReference>
<dbReference type="EMBL" id="BC039343">
    <property type="protein sequence ID" value="AAH39343.1"/>
    <property type="molecule type" value="mRNA"/>
</dbReference>
<dbReference type="CCDS" id="CCDS32729.1">
    <molecule id="Q9UK76-2"/>
</dbReference>
<dbReference type="CCDS" id="CCDS45771.1">
    <molecule id="Q9UK76-1"/>
</dbReference>
<dbReference type="CCDS" id="CCDS45772.1">
    <molecule id="Q9UK76-3"/>
</dbReference>
<dbReference type="RefSeq" id="NP_001002032.1">
    <molecule id="Q9UK76-2"/>
    <property type="nucleotide sequence ID" value="NM_001002032.3"/>
</dbReference>
<dbReference type="RefSeq" id="NP_001002033.1">
    <molecule id="Q9UK76-3"/>
    <property type="nucleotide sequence ID" value="NM_001002033.3"/>
</dbReference>
<dbReference type="RefSeq" id="NP_001275538.1">
    <molecule id="Q9UK76-3"/>
    <property type="nucleotide sequence ID" value="NM_001288609.1"/>
</dbReference>
<dbReference type="RefSeq" id="NP_001275539.1">
    <molecule id="Q9UK76-3"/>
    <property type="nucleotide sequence ID" value="NM_001288610.1"/>
</dbReference>
<dbReference type="RefSeq" id="NP_001275540.1">
    <property type="nucleotide sequence ID" value="NM_001288611.1"/>
</dbReference>
<dbReference type="RefSeq" id="NP_057269.1">
    <molecule id="Q9UK76-1"/>
    <property type="nucleotide sequence ID" value="NM_016185.4"/>
</dbReference>
<dbReference type="RefSeq" id="XP_024306547.1">
    <molecule id="Q9UK76-3"/>
    <property type="nucleotide sequence ID" value="XM_024450779.2"/>
</dbReference>
<dbReference type="BioGRID" id="119338">
    <property type="interactions" value="45"/>
</dbReference>
<dbReference type="FunCoup" id="Q9UK76">
    <property type="interactions" value="1929"/>
</dbReference>
<dbReference type="IntAct" id="Q9UK76">
    <property type="interactions" value="20"/>
</dbReference>
<dbReference type="MINT" id="Q9UK76"/>
<dbReference type="STRING" id="9606.ENSP00000348316"/>
<dbReference type="GlyGen" id="Q9UK76">
    <property type="glycosylation" value="4 sites, 3 N-linked glycans (3 sites), 1 O-linked glycan (1 site)"/>
</dbReference>
<dbReference type="iPTMnet" id="Q9UK76"/>
<dbReference type="MetOSite" id="Q9UK76"/>
<dbReference type="PhosphoSitePlus" id="Q9UK76"/>
<dbReference type="BioMuta" id="JPT1"/>
<dbReference type="jPOST" id="Q9UK76"/>
<dbReference type="MassIVE" id="Q9UK76"/>
<dbReference type="PaxDb" id="9606-ENSP00000348316"/>
<dbReference type="PeptideAtlas" id="Q9UK76"/>
<dbReference type="ProteomicsDB" id="84734">
    <molecule id="Q9UK76-1"/>
</dbReference>
<dbReference type="ProteomicsDB" id="84735">
    <molecule id="Q9UK76-2"/>
</dbReference>
<dbReference type="ProteomicsDB" id="84736">
    <molecule id="Q9UK76-3"/>
</dbReference>
<dbReference type="Pumba" id="Q9UK76"/>
<dbReference type="TopDownProteomics" id="Q9UK76-1">
    <molecule id="Q9UK76-1"/>
</dbReference>
<dbReference type="TopDownProteomics" id="Q9UK76-2">
    <molecule id="Q9UK76-2"/>
</dbReference>
<dbReference type="TopDownProteomics" id="Q9UK76-3">
    <molecule id="Q9UK76-3"/>
</dbReference>
<dbReference type="Antibodypedia" id="32102">
    <property type="antibodies" value="233 antibodies from 28 providers"/>
</dbReference>
<dbReference type="DNASU" id="51155"/>
<dbReference type="Ensembl" id="ENST00000356033.8">
    <molecule id="Q9UK76-2"/>
    <property type="protein sequence ID" value="ENSP00000348316.4"/>
    <property type="gene ID" value="ENSG00000189159.16"/>
</dbReference>
<dbReference type="Ensembl" id="ENST00000409753.8">
    <molecule id="Q9UK76-1"/>
    <property type="protein sequence ID" value="ENSP00000387059.3"/>
    <property type="gene ID" value="ENSG00000189159.16"/>
</dbReference>
<dbReference type="Ensembl" id="ENST00000470924.5">
    <molecule id="Q9UK76-3"/>
    <property type="protein sequence ID" value="ENSP00000462784.1"/>
    <property type="gene ID" value="ENSG00000189159.16"/>
</dbReference>
<dbReference type="Ensembl" id="ENST00000476258.5">
    <molecule id="Q9UK76-3"/>
    <property type="protein sequence ID" value="ENSP00000464266.1"/>
    <property type="gene ID" value="ENSG00000189159.16"/>
</dbReference>
<dbReference type="Ensembl" id="ENST00000481647.5">
    <molecule id="Q9UK76-3"/>
    <property type="protein sequence ID" value="ENSP00000462478.1"/>
    <property type="gene ID" value="ENSG00000189159.16"/>
</dbReference>
<dbReference type="Ensembl" id="ENST00000482348.5">
    <molecule id="Q9UK76-3"/>
    <property type="protein sequence ID" value="ENSP00000462834.1"/>
    <property type="gene ID" value="ENSG00000189159.16"/>
</dbReference>
<dbReference type="GeneID" id="51155"/>
<dbReference type="KEGG" id="hsa:51155"/>
<dbReference type="MANE-Select" id="ENST00000409753.8">
    <property type="protein sequence ID" value="ENSP00000387059.3"/>
    <property type="RefSeq nucleotide sequence ID" value="NM_016185.4"/>
    <property type="RefSeq protein sequence ID" value="NP_057269.1"/>
</dbReference>
<dbReference type="UCSC" id="uc002jna.3">
    <molecule id="Q9UK76-1"/>
    <property type="organism name" value="human"/>
</dbReference>
<dbReference type="AGR" id="HGNC:14569"/>
<dbReference type="CTD" id="51155"/>
<dbReference type="DisGeNET" id="51155"/>
<dbReference type="GeneCards" id="JPT1"/>
<dbReference type="HGNC" id="HGNC:14569">
    <property type="gene designation" value="JPT1"/>
</dbReference>
<dbReference type="HPA" id="ENSG00000189159">
    <property type="expression patterns" value="Tissue enhanced (testis)"/>
</dbReference>
<dbReference type="MIM" id="619242">
    <property type="type" value="gene"/>
</dbReference>
<dbReference type="neXtProt" id="NX_Q9UK76"/>
<dbReference type="OpenTargets" id="ENSG00000189159"/>
<dbReference type="PharmGKB" id="PA29347"/>
<dbReference type="VEuPathDB" id="HostDB:ENSG00000189159"/>
<dbReference type="eggNOG" id="ENOG502TDPY">
    <property type="taxonomic scope" value="Eukaryota"/>
</dbReference>
<dbReference type="GeneTree" id="ENSGT00940000162422"/>
<dbReference type="HOGENOM" id="CLU_123394_0_0_1"/>
<dbReference type="InParanoid" id="Q9UK76"/>
<dbReference type="OMA" id="VWTQRRE"/>
<dbReference type="OrthoDB" id="10071234at2759"/>
<dbReference type="PAN-GO" id="Q9UK76">
    <property type="GO annotations" value="1 GO annotation based on evolutionary models"/>
</dbReference>
<dbReference type="PhylomeDB" id="Q9UK76"/>
<dbReference type="TreeFam" id="TF327169"/>
<dbReference type="PathwayCommons" id="Q9UK76"/>
<dbReference type="SignaLink" id="Q9UK76"/>
<dbReference type="BioGRID-ORCS" id="51155">
    <property type="hits" value="7 hits in 676 CRISPR screens"/>
</dbReference>
<dbReference type="ChiTaRS" id="JPT1">
    <property type="organism name" value="human"/>
</dbReference>
<dbReference type="GeneWiki" id="HN1_(gene)"/>
<dbReference type="GenomeRNAi" id="51155"/>
<dbReference type="Pharos" id="Q9UK76">
    <property type="development level" value="Tbio"/>
</dbReference>
<dbReference type="PRO" id="PR:Q9UK76"/>
<dbReference type="Proteomes" id="UP000005640">
    <property type="component" value="Chromosome 17"/>
</dbReference>
<dbReference type="RNAct" id="Q9UK76">
    <property type="molecule type" value="protein"/>
</dbReference>
<dbReference type="Bgee" id="ENSG00000189159">
    <property type="expression patterns" value="Expressed in cortical plate and 194 other cell types or tissues"/>
</dbReference>
<dbReference type="ExpressionAtlas" id="Q9UK76">
    <property type="expression patterns" value="baseline and differential"/>
</dbReference>
<dbReference type="GO" id="GO:0005829">
    <property type="term" value="C:cytosol"/>
    <property type="evidence" value="ECO:0000314"/>
    <property type="project" value="HPA"/>
</dbReference>
<dbReference type="GO" id="GO:0045171">
    <property type="term" value="C:intercellular bridge"/>
    <property type="evidence" value="ECO:0000314"/>
    <property type="project" value="HPA"/>
</dbReference>
<dbReference type="GO" id="GO:0015630">
    <property type="term" value="C:microtubule cytoskeleton"/>
    <property type="evidence" value="ECO:0000314"/>
    <property type="project" value="HPA"/>
</dbReference>
<dbReference type="GO" id="GO:0005654">
    <property type="term" value="C:nucleoplasm"/>
    <property type="evidence" value="ECO:0000314"/>
    <property type="project" value="HPA"/>
</dbReference>
<dbReference type="GO" id="GO:0005634">
    <property type="term" value="C:nucleus"/>
    <property type="evidence" value="ECO:0000318"/>
    <property type="project" value="GO_Central"/>
</dbReference>
<dbReference type="InterPro" id="IPR033335">
    <property type="entry name" value="JUPITER"/>
</dbReference>
<dbReference type="PANTHER" id="PTHR34930">
    <property type="entry name" value="GEO05313P1"/>
    <property type="match status" value="1"/>
</dbReference>
<dbReference type="PANTHER" id="PTHR34930:SF4">
    <property type="entry name" value="JUPITER MICROTUBULE ASSOCIATED HOMOLOG 1"/>
    <property type="match status" value="1"/>
</dbReference>
<dbReference type="Pfam" id="PF17054">
    <property type="entry name" value="JUPITER"/>
    <property type="match status" value="1"/>
</dbReference>
<organism>
    <name type="scientific">Homo sapiens</name>
    <name type="common">Human</name>
    <dbReference type="NCBI Taxonomy" id="9606"/>
    <lineage>
        <taxon>Eukaryota</taxon>
        <taxon>Metazoa</taxon>
        <taxon>Chordata</taxon>
        <taxon>Craniata</taxon>
        <taxon>Vertebrata</taxon>
        <taxon>Euteleostomi</taxon>
        <taxon>Mammalia</taxon>
        <taxon>Eutheria</taxon>
        <taxon>Euarchontoglires</taxon>
        <taxon>Primates</taxon>
        <taxon>Haplorrhini</taxon>
        <taxon>Catarrhini</taxon>
        <taxon>Hominidae</taxon>
        <taxon>Homo</taxon>
    </lineage>
</organism>
<evidence type="ECO:0000256" key="1">
    <source>
        <dbReference type="SAM" id="MobiDB-lite"/>
    </source>
</evidence>
<evidence type="ECO:0000269" key="2">
    <source>
    </source>
</evidence>
<evidence type="ECO:0000269" key="3">
    <source>
    </source>
</evidence>
<evidence type="ECO:0000269" key="4">
    <source>
    </source>
</evidence>
<evidence type="ECO:0000269" key="5">
    <source>
    </source>
</evidence>
<evidence type="ECO:0000269" key="6">
    <source>
    </source>
</evidence>
<evidence type="ECO:0000269" key="7">
    <source>
    </source>
</evidence>
<evidence type="ECO:0000303" key="8">
    <source>
    </source>
</evidence>
<evidence type="ECO:0000303" key="9">
    <source>
    </source>
</evidence>
<evidence type="ECO:0000303" key="10">
    <source>
    </source>
</evidence>
<evidence type="ECO:0000305" key="11"/>
<evidence type="ECO:0000312" key="12">
    <source>
        <dbReference type="HGNC" id="HGNC:14569"/>
    </source>
</evidence>
<evidence type="ECO:0007744" key="13">
    <source>
    </source>
</evidence>
<evidence type="ECO:0007744" key="14">
    <source>
    </source>
</evidence>
<evidence type="ECO:0007744" key="15">
    <source>
    </source>
</evidence>
<evidence type="ECO:0007744" key="16">
    <source>
    </source>
</evidence>
<evidence type="ECO:0007744" key="17">
    <source>
    </source>
</evidence>
<evidence type="ECO:0007744" key="18">
    <source>
    </source>
</evidence>
<evidence type="ECO:0007744" key="19">
    <source>
    </source>
</evidence>
<evidence type="ECO:0007744" key="20">
    <source>
    </source>
</evidence>
<evidence type="ECO:0007744" key="21">
    <source>
    </source>
</evidence>
<evidence type="ECO:0007744" key="22">
    <source>
    </source>
</evidence>
<proteinExistence type="evidence at protein level"/>
<gene>
    <name evidence="12" type="primary">JPT1</name>
    <name type="synonym">ARM2</name>
    <name evidence="10" type="synonym">HN1</name>
</gene>
<accession>Q9UK76</accession>
<accession>B2R6K3</accession>
<accession>Q53FG7</accession>
<accession>Q7Z2D2</accession>
<accession>Q7Z2F0</accession>
<keyword id="KW-0007">Acetylation</keyword>
<keyword id="KW-0025">Alternative splicing</keyword>
<keyword id="KW-0963">Cytoplasm</keyword>
<keyword id="KW-0903">Direct protein sequencing</keyword>
<keyword id="KW-0539">Nucleus</keyword>
<keyword id="KW-0597">Phosphoprotein</keyword>
<keyword id="KW-1267">Proteomics identification</keyword>
<keyword id="KW-1185">Reference proteome</keyword>
<reference key="1">
    <citation type="journal article" date="2004" name="Gene">
        <title>Cloning, expression and subcellular localization of HN1 and HN1L genes, as well as characterization of their orthologs, defining an evolutionarily conserved gene family.</title>
        <authorList>
            <person name="Zhou G."/>
            <person name="Wang J."/>
            <person name="Zhang Y."/>
            <person name="Zhong C."/>
            <person name="Ni J."/>
            <person name="Wang L."/>
            <person name="Guo J."/>
            <person name="Zhang K."/>
            <person name="Yu L."/>
            <person name="Zhao S."/>
        </authorList>
    </citation>
    <scope>NUCLEOTIDE SEQUENCE [GENOMIC DNA / MRNA] (ISOFORMS 1; 2 AND 3)</scope>
    <scope>TISSUE SPECIFICITY</scope>
</reference>
<reference key="2">
    <citation type="submission" date="1999-08" db="EMBL/GenBank/DDBJ databases">
        <title>Cloning of human homolog of Hn1 cDNA.</title>
        <authorList>
            <person name="Ji Y."/>
            <person name="Huang T."/>
            <person name="Johnson B.H."/>
            <person name="Thompson E.B."/>
        </authorList>
    </citation>
    <scope>NUCLEOTIDE SEQUENCE [MRNA] (ISOFORM 1)</scope>
    <source>
        <tissue>T-cell</tissue>
    </source>
</reference>
<reference key="3">
    <citation type="submission" date="2000-05" db="EMBL/GenBank/DDBJ databases">
        <authorList>
            <person name="Korkmaz K.S."/>
            <person name="Korkmaz C.G."/>
            <person name="Saatcioglu F."/>
        </authorList>
    </citation>
    <scope>NUCLEOTIDE SEQUENCE [GENOMIC DNA / MRNA] (ISOFORM 1)</scope>
    <source>
        <tissue>Prostatic carcinoma</tissue>
    </source>
</reference>
<reference key="4">
    <citation type="journal article" date="2004" name="Nat. Genet.">
        <title>Complete sequencing and characterization of 21,243 full-length human cDNAs.</title>
        <authorList>
            <person name="Ota T."/>
            <person name="Suzuki Y."/>
            <person name="Nishikawa T."/>
            <person name="Otsuki T."/>
            <person name="Sugiyama T."/>
            <person name="Irie R."/>
            <person name="Wakamatsu A."/>
            <person name="Hayashi K."/>
            <person name="Sato H."/>
            <person name="Nagai K."/>
            <person name="Kimura K."/>
            <person name="Makita H."/>
            <person name="Sekine M."/>
            <person name="Obayashi M."/>
            <person name="Nishi T."/>
            <person name="Shibahara T."/>
            <person name="Tanaka T."/>
            <person name="Ishii S."/>
            <person name="Yamamoto J."/>
            <person name="Saito K."/>
            <person name="Kawai Y."/>
            <person name="Isono Y."/>
            <person name="Nakamura Y."/>
            <person name="Nagahari K."/>
            <person name="Murakami K."/>
            <person name="Yasuda T."/>
            <person name="Iwayanagi T."/>
            <person name="Wagatsuma M."/>
            <person name="Shiratori A."/>
            <person name="Sudo H."/>
            <person name="Hosoiri T."/>
            <person name="Kaku Y."/>
            <person name="Kodaira H."/>
            <person name="Kondo H."/>
            <person name="Sugawara M."/>
            <person name="Takahashi M."/>
            <person name="Kanda K."/>
            <person name="Yokoi T."/>
            <person name="Furuya T."/>
            <person name="Kikkawa E."/>
            <person name="Omura Y."/>
            <person name="Abe K."/>
            <person name="Kamihara K."/>
            <person name="Katsuta N."/>
            <person name="Sato K."/>
            <person name="Tanikawa M."/>
            <person name="Yamazaki M."/>
            <person name="Ninomiya K."/>
            <person name="Ishibashi T."/>
            <person name="Yamashita H."/>
            <person name="Murakawa K."/>
            <person name="Fujimori K."/>
            <person name="Tanai H."/>
            <person name="Kimata M."/>
            <person name="Watanabe M."/>
            <person name="Hiraoka S."/>
            <person name="Chiba Y."/>
            <person name="Ishida S."/>
            <person name="Ono Y."/>
            <person name="Takiguchi S."/>
            <person name="Watanabe S."/>
            <person name="Yosida M."/>
            <person name="Hotuta T."/>
            <person name="Kusano J."/>
            <person name="Kanehori K."/>
            <person name="Takahashi-Fujii A."/>
            <person name="Hara H."/>
            <person name="Tanase T.-O."/>
            <person name="Nomura Y."/>
            <person name="Togiya S."/>
            <person name="Komai F."/>
            <person name="Hara R."/>
            <person name="Takeuchi K."/>
            <person name="Arita M."/>
            <person name="Imose N."/>
            <person name="Musashino K."/>
            <person name="Yuuki H."/>
            <person name="Oshima A."/>
            <person name="Sasaki N."/>
            <person name="Aotsuka S."/>
            <person name="Yoshikawa Y."/>
            <person name="Matsunawa H."/>
            <person name="Ichihara T."/>
            <person name="Shiohata N."/>
            <person name="Sano S."/>
            <person name="Moriya S."/>
            <person name="Momiyama H."/>
            <person name="Satoh N."/>
            <person name="Takami S."/>
            <person name="Terashima Y."/>
            <person name="Suzuki O."/>
            <person name="Nakagawa S."/>
            <person name="Senoh A."/>
            <person name="Mizoguchi H."/>
            <person name="Goto Y."/>
            <person name="Shimizu F."/>
            <person name="Wakebe H."/>
            <person name="Hishigaki H."/>
            <person name="Watanabe T."/>
            <person name="Sugiyama A."/>
            <person name="Takemoto M."/>
            <person name="Kawakami B."/>
            <person name="Yamazaki M."/>
            <person name="Watanabe K."/>
            <person name="Kumagai A."/>
            <person name="Itakura S."/>
            <person name="Fukuzumi Y."/>
            <person name="Fujimori Y."/>
            <person name="Komiyama M."/>
            <person name="Tashiro H."/>
            <person name="Tanigami A."/>
            <person name="Fujiwara T."/>
            <person name="Ono T."/>
            <person name="Yamada K."/>
            <person name="Fujii Y."/>
            <person name="Ozaki K."/>
            <person name="Hirao M."/>
            <person name="Ohmori Y."/>
            <person name="Kawabata A."/>
            <person name="Hikiji T."/>
            <person name="Kobatake N."/>
            <person name="Inagaki H."/>
            <person name="Ikema Y."/>
            <person name="Okamoto S."/>
            <person name="Okitani R."/>
            <person name="Kawakami T."/>
            <person name="Noguchi S."/>
            <person name="Itoh T."/>
            <person name="Shigeta K."/>
            <person name="Senba T."/>
            <person name="Matsumura K."/>
            <person name="Nakajima Y."/>
            <person name="Mizuno T."/>
            <person name="Morinaga M."/>
            <person name="Sasaki M."/>
            <person name="Togashi T."/>
            <person name="Oyama M."/>
            <person name="Hata H."/>
            <person name="Watanabe M."/>
            <person name="Komatsu T."/>
            <person name="Mizushima-Sugano J."/>
            <person name="Satoh T."/>
            <person name="Shirai Y."/>
            <person name="Takahashi Y."/>
            <person name="Nakagawa K."/>
            <person name="Okumura K."/>
            <person name="Nagase T."/>
            <person name="Nomura N."/>
            <person name="Kikuchi H."/>
            <person name="Masuho Y."/>
            <person name="Yamashita R."/>
            <person name="Nakai K."/>
            <person name="Yada T."/>
            <person name="Nakamura Y."/>
            <person name="Ohara O."/>
            <person name="Isogai T."/>
            <person name="Sugano S."/>
        </authorList>
    </citation>
    <scope>NUCLEOTIDE SEQUENCE [LARGE SCALE MRNA] (ISOFORM 1)</scope>
    <source>
        <tissue>Brain</tissue>
    </source>
</reference>
<reference key="5">
    <citation type="submission" date="2005-04" db="EMBL/GenBank/DDBJ databases">
        <authorList>
            <person name="Suzuki Y."/>
            <person name="Sugano S."/>
            <person name="Totoki Y."/>
            <person name="Toyoda A."/>
            <person name="Takeda T."/>
            <person name="Sakaki Y."/>
            <person name="Tanaka A."/>
            <person name="Yokoyama S."/>
        </authorList>
    </citation>
    <scope>NUCLEOTIDE SEQUENCE [LARGE SCALE MRNA] (ISOFORM 1)</scope>
    <source>
        <tissue>Thymus</tissue>
    </source>
</reference>
<reference key="6">
    <citation type="submission" date="2005-07" db="EMBL/GenBank/DDBJ databases">
        <authorList>
            <person name="Mural R.J."/>
            <person name="Istrail S."/>
            <person name="Sutton G.G."/>
            <person name="Florea L."/>
            <person name="Halpern A.L."/>
            <person name="Mobarry C.M."/>
            <person name="Lippert R."/>
            <person name="Walenz B."/>
            <person name="Shatkay H."/>
            <person name="Dew I."/>
            <person name="Miller J.R."/>
            <person name="Flanigan M.J."/>
            <person name="Edwards N.J."/>
            <person name="Bolanos R."/>
            <person name="Fasulo D."/>
            <person name="Halldorsson B.V."/>
            <person name="Hannenhalli S."/>
            <person name="Turner R."/>
            <person name="Yooseph S."/>
            <person name="Lu F."/>
            <person name="Nusskern D.R."/>
            <person name="Shue B.C."/>
            <person name="Zheng X.H."/>
            <person name="Zhong F."/>
            <person name="Delcher A.L."/>
            <person name="Huson D.H."/>
            <person name="Kravitz S.A."/>
            <person name="Mouchard L."/>
            <person name="Reinert K."/>
            <person name="Remington K.A."/>
            <person name="Clark A.G."/>
            <person name="Waterman M.S."/>
            <person name="Eichler E.E."/>
            <person name="Adams M.D."/>
            <person name="Hunkapiller M.W."/>
            <person name="Myers E.W."/>
            <person name="Venter J.C."/>
        </authorList>
    </citation>
    <scope>NUCLEOTIDE SEQUENCE [LARGE SCALE GENOMIC DNA]</scope>
</reference>
<reference key="7">
    <citation type="journal article" date="2004" name="Genome Res.">
        <title>The status, quality, and expansion of the NIH full-length cDNA project: the Mammalian Gene Collection (MGC).</title>
        <authorList>
            <consortium name="The MGC Project Team"/>
        </authorList>
    </citation>
    <scope>NUCLEOTIDE SEQUENCE [LARGE SCALE MRNA] (ISOFORMS 1 AND 3)</scope>
    <source>
        <tissue>Placenta</tissue>
        <tissue>Testis</tissue>
    </source>
</reference>
<reference key="8">
    <citation type="journal article" date="2006" name="J. Proteome Res.">
        <title>Beyond linker histones and high mobility group proteins: global profiling of perchloric acid soluble proteins.</title>
        <authorList>
            <person name="Zougman A."/>
            <person name="Wisniewski J.R."/>
        </authorList>
    </citation>
    <scope>PROTEIN SEQUENCE OF 85-99</scope>
    <scope>ACETYLATION AT THR-2</scope>
    <scope>PHOSPHORYLATION AT SER-87</scope>
    <scope>IDENTIFICATION BY MASS SPECTROMETRY</scope>
</reference>
<reference key="9">
    <citation type="journal article" date="2006" name="Cell">
        <title>Global, in vivo, and site-specific phosphorylation dynamics in signaling networks.</title>
        <authorList>
            <person name="Olsen J.V."/>
            <person name="Blagoev B."/>
            <person name="Gnad F."/>
            <person name="Macek B."/>
            <person name="Kumar C."/>
            <person name="Mortensen P."/>
            <person name="Mann M."/>
        </authorList>
    </citation>
    <scope>PHOSPHORYLATION [LARGE SCALE ANALYSIS] AT SER-131</scope>
    <scope>IDENTIFICATION BY MASS SPECTROMETRY [LARGE SCALE ANALYSIS]</scope>
    <source>
        <tissue>Cervix carcinoma</tissue>
    </source>
</reference>
<reference key="10">
    <citation type="journal article" date="2007" name="J. Proteome Res.">
        <title>Improved titanium dioxide enrichment of phosphopeptides from HeLa cells and high confident phosphopeptide identification by cross-validation of MS/MS and MS/MS/MS spectra.</title>
        <authorList>
            <person name="Yu L.R."/>
            <person name="Zhu Z."/>
            <person name="Chan K.C."/>
            <person name="Issaq H.J."/>
            <person name="Dimitrov D.S."/>
            <person name="Veenstra T.D."/>
        </authorList>
    </citation>
    <scope>PHOSPHORYLATION [LARGE SCALE ANALYSIS] AT THR-54</scope>
    <scope>IDENTIFICATION BY MASS SPECTROMETRY [LARGE SCALE ANALYSIS]</scope>
    <source>
        <tissue>Cervix carcinoma</tissue>
    </source>
</reference>
<reference key="11">
    <citation type="journal article" date="2008" name="J. Proteome Res.">
        <title>Phosphoproteome of resting human platelets.</title>
        <authorList>
            <person name="Zahedi R.P."/>
            <person name="Lewandrowski U."/>
            <person name="Wiesner J."/>
            <person name="Wortelkamp S."/>
            <person name="Moebius J."/>
            <person name="Schuetz C."/>
            <person name="Walter U."/>
            <person name="Gambaryan S."/>
            <person name="Sickmann A."/>
        </authorList>
    </citation>
    <scope>IDENTIFICATION BY MASS SPECTROMETRY [LARGE SCALE ANALYSIS]</scope>
    <source>
        <tissue>Platelet</tissue>
    </source>
</reference>
<reference key="12">
    <citation type="journal article" date="2008" name="Proc. Natl. Acad. Sci. U.S.A.">
        <title>A quantitative atlas of mitotic phosphorylation.</title>
        <authorList>
            <person name="Dephoure N."/>
            <person name="Zhou C."/>
            <person name="Villen J."/>
            <person name="Beausoleil S.A."/>
            <person name="Bakalarski C.E."/>
            <person name="Elledge S.J."/>
            <person name="Gygi S.P."/>
        </authorList>
    </citation>
    <scope>PHOSPHORYLATION [LARGE SCALE ANALYSIS] AT THR-54; SER-80 AND SER-87</scope>
    <scope>IDENTIFICATION BY MASS SPECTROMETRY [LARGE SCALE ANALYSIS]</scope>
    <source>
        <tissue>Cervix carcinoma</tissue>
    </source>
</reference>
<reference key="13">
    <citation type="journal article" date="2009" name="Anal. Chem.">
        <title>Lys-N and trypsin cover complementary parts of the phosphoproteome in a refined SCX-based approach.</title>
        <authorList>
            <person name="Gauci S."/>
            <person name="Helbig A.O."/>
            <person name="Slijper M."/>
            <person name="Krijgsveld J."/>
            <person name="Heck A.J."/>
            <person name="Mohammed S."/>
        </authorList>
    </citation>
    <scope>IDENTIFICATION BY MASS SPECTROMETRY [LARGE SCALE ANALYSIS]</scope>
</reference>
<reference key="14">
    <citation type="journal article" date="2009" name="Sci. Signal.">
        <title>Quantitative phosphoproteomic analysis of T cell receptor signaling reveals system-wide modulation of protein-protein interactions.</title>
        <authorList>
            <person name="Mayya V."/>
            <person name="Lundgren D.H."/>
            <person name="Hwang S.-I."/>
            <person name="Rezaul K."/>
            <person name="Wu L."/>
            <person name="Eng J.K."/>
            <person name="Rodionov V."/>
            <person name="Han D.K."/>
        </authorList>
    </citation>
    <scope>PHOSPHORYLATION [LARGE SCALE ANALYSIS] AT THR-54; SER-87 AND SER-88</scope>
    <scope>IDENTIFICATION BY MASS SPECTROMETRY [LARGE SCALE ANALYSIS]</scope>
    <source>
        <tissue>Leukemic T-cell</tissue>
    </source>
</reference>
<reference key="15">
    <citation type="journal article" date="2009" name="Science">
        <title>Lysine acetylation targets protein complexes and co-regulates major cellular functions.</title>
        <authorList>
            <person name="Choudhary C."/>
            <person name="Kumar C."/>
            <person name="Gnad F."/>
            <person name="Nielsen M.L."/>
            <person name="Rehman M."/>
            <person name="Walther T.C."/>
            <person name="Olsen J.V."/>
            <person name="Mann M."/>
        </authorList>
    </citation>
    <scope>ACETYLATION [LARGE SCALE ANALYSIS] AT LYS-148</scope>
    <scope>IDENTIFICATION BY MASS SPECTROMETRY [LARGE SCALE ANALYSIS]</scope>
</reference>
<reference key="16">
    <citation type="journal article" date="2010" name="Sci. Signal.">
        <title>Quantitative phosphoproteomics reveals widespread full phosphorylation site occupancy during mitosis.</title>
        <authorList>
            <person name="Olsen J.V."/>
            <person name="Vermeulen M."/>
            <person name="Santamaria A."/>
            <person name="Kumar C."/>
            <person name="Miller M.L."/>
            <person name="Jensen L.J."/>
            <person name="Gnad F."/>
            <person name="Cox J."/>
            <person name="Jensen T.S."/>
            <person name="Nigg E.A."/>
            <person name="Brunak S."/>
            <person name="Mann M."/>
        </authorList>
    </citation>
    <scope>PHOSPHORYLATION [LARGE SCALE ANALYSIS] AT THR-54; SER-87; SER-88 AND SER-131</scope>
    <scope>IDENTIFICATION BY MASS SPECTROMETRY [LARGE SCALE ANALYSIS]</scope>
    <source>
        <tissue>Cervix carcinoma</tissue>
    </source>
</reference>
<reference key="17">
    <citation type="journal article" date="2011" name="BMC Syst. Biol.">
        <title>Initial characterization of the human central proteome.</title>
        <authorList>
            <person name="Burkard T.R."/>
            <person name="Planyavsky M."/>
            <person name="Kaupe I."/>
            <person name="Breitwieser F.P."/>
            <person name="Buerckstuemmer T."/>
            <person name="Bennett K.L."/>
            <person name="Superti-Furga G."/>
            <person name="Colinge J."/>
        </authorList>
    </citation>
    <scope>IDENTIFICATION BY MASS SPECTROMETRY [LARGE SCALE ANALYSIS]</scope>
</reference>
<reference key="18">
    <citation type="journal article" date="2011" name="DNA Cell Biol.">
        <title>Ubiquitously expressed hematological and neurological expressed 1 downregulates Akt-mediated GSK3beta signaling, and its knockdown results in deregulated G2/M transition in prostate cells.</title>
        <authorList>
            <person name="Varisli L."/>
            <person name="Gonen-Korkmaz C."/>
            <person name="Debelec-Butuner B."/>
            <person name="Erbaykent-Tepedelen B."/>
            <person name="Muhammed H.S."/>
            <person name="Bogurcu N."/>
            <person name="Saatcioglu F."/>
            <person name="Korkmaz K.S."/>
        </authorList>
    </citation>
    <scope>FUNCTION</scope>
    <scope>SUBCELLULAR LOCATION</scope>
    <scope>INDUCTION BY EGF</scope>
</reference>
<reference key="19">
    <citation type="journal article" date="2011" name="Sci. Signal.">
        <title>System-wide temporal characterization of the proteome and phosphoproteome of human embryonic stem cell differentiation.</title>
        <authorList>
            <person name="Rigbolt K.T."/>
            <person name="Prokhorova T.A."/>
            <person name="Akimov V."/>
            <person name="Henningsen J."/>
            <person name="Johansen P.T."/>
            <person name="Kratchmarova I."/>
            <person name="Kassem M."/>
            <person name="Mann M."/>
            <person name="Olsen J.V."/>
            <person name="Blagoev B."/>
        </authorList>
    </citation>
    <scope>PHOSPHORYLATION [LARGE SCALE ANALYSIS] AT SER-87</scope>
    <scope>IDENTIFICATION BY MASS SPECTROMETRY [LARGE SCALE ANALYSIS]</scope>
</reference>
<reference key="20">
    <citation type="journal article" date="2012" name="Mol. Cell. Endocrinol.">
        <title>Androgen regulated HN1 leads proteosomal degradation of androgen receptor (AR) and negatively influences AR mediated transactivation in prostate cells.</title>
        <authorList>
            <person name="Varisli L."/>
            <person name="Gonen-Korkmaz C."/>
            <person name="Syed H.M."/>
            <person name="Bogurcu N."/>
            <person name="Debelec-Butuner B."/>
            <person name="Erbaykent-Tepedelen B."/>
            <person name="Korkmaz K.S."/>
        </authorList>
    </citation>
    <scope>FUNCTION</scope>
    <scope>INDUCTION BY ANDROGENS</scope>
</reference>
<reference key="21">
    <citation type="journal article" date="2012" name="Proc. Natl. Acad. Sci. U.S.A.">
        <title>N-terminal acetylome analyses and functional insights of the N-terminal acetyltransferase NatB.</title>
        <authorList>
            <person name="Van Damme P."/>
            <person name="Lasa M."/>
            <person name="Polevoda B."/>
            <person name="Gazquez C."/>
            <person name="Elosegui-Artola A."/>
            <person name="Kim D.S."/>
            <person name="De Juan-Pardo E."/>
            <person name="Demeyer K."/>
            <person name="Hole K."/>
            <person name="Larrea E."/>
            <person name="Timmerman E."/>
            <person name="Prieto J."/>
            <person name="Arnesen T."/>
            <person name="Sherman F."/>
            <person name="Gevaert K."/>
            <person name="Aldabe R."/>
        </authorList>
    </citation>
    <scope>ACETYLATION [LARGE SCALE ANALYSIS] AT MET-1 AND THR-2</scope>
    <scope>CLEAVAGE OF INITIATOR METHIONINE [LARGE SCALE ANALYSIS]</scope>
    <scope>IDENTIFICATION BY MASS SPECTROMETRY [LARGE SCALE ANALYSIS]</scope>
</reference>
<reference key="22">
    <citation type="journal article" date="2013" name="J. Proteome Res.">
        <title>Toward a comprehensive characterization of a human cancer cell phosphoproteome.</title>
        <authorList>
            <person name="Zhou H."/>
            <person name="Di Palma S."/>
            <person name="Preisinger C."/>
            <person name="Peng M."/>
            <person name="Polat A.N."/>
            <person name="Heck A.J."/>
            <person name="Mohammed S."/>
        </authorList>
    </citation>
    <scope>PHOSPHORYLATION [LARGE SCALE ANALYSIS] AT SER-28; SER-31; THR-54; SER-71; SER-80; SER-87; SER-88 AND SER-92</scope>
    <scope>IDENTIFICATION BY MASS SPECTROMETRY [LARGE SCALE ANALYSIS]</scope>
    <source>
        <tissue>Cervix carcinoma</tissue>
        <tissue>Erythroleukemia</tissue>
    </source>
</reference>
<reference key="23">
    <citation type="journal article" date="2014" name="Biochem. Biophys. Res. Commun.">
        <title>MiR-132 prohibits proliferation, invasion, migration, and metastasis in breast cancer by targeting HN1.</title>
        <authorList>
            <person name="Zhang Z.G."/>
            <person name="Chen W.X."/>
            <person name="Wu Y.H."/>
            <person name="Liang H.F."/>
            <person name="Zhang B.X."/>
        </authorList>
    </citation>
    <scope>FUNCTION</scope>
    <scope>INDUCTION BY MIR-132</scope>
</reference>
<reference key="24">
    <citation type="journal article" date="2014" name="J. Proteomics">
        <title>An enzyme assisted RP-RPLC approach for in-depth analysis of human liver phosphoproteome.</title>
        <authorList>
            <person name="Bian Y."/>
            <person name="Song C."/>
            <person name="Cheng K."/>
            <person name="Dong M."/>
            <person name="Wang F."/>
            <person name="Huang J."/>
            <person name="Sun D."/>
            <person name="Wang L."/>
            <person name="Ye M."/>
            <person name="Zou H."/>
        </authorList>
    </citation>
    <scope>PHOSPHORYLATION [LARGE SCALE ANALYSIS] AT SER-88</scope>
    <scope>IDENTIFICATION BY MASS SPECTROMETRY [LARGE SCALE ANALYSIS]</scope>
    <source>
        <tissue>Liver</tissue>
    </source>
</reference>
<reference key="25">
    <citation type="journal article" date="2015" name="J. Cell. Biochem.">
        <title>HN1 negatively influences the beta-catenin/E-cadherin interaction, and contributes to migration in prostate cells.</title>
        <authorList>
            <person name="Varisli L."/>
            <person name="Ozturk B.E."/>
            <person name="Akyuz G.K."/>
            <person name="Korkmaz K.S."/>
        </authorList>
    </citation>
    <scope>FUNCTION</scope>
    <scope>INTERACTION WITH A COMPLEX COMPOSED OF AXIN1; AXIN2; APC; CSNK1A1 AND GSK3B</scope>
</reference>
<name>JUPI1_HUMAN</name>
<comment type="function">
    <text evidence="4 5 6 7">Modulates negatively AKT-mediated GSK3B signaling (PubMed:21323578, PubMed:22155408). Induces CTNNB1 'Ser-33' phosphorylation and degradation through the suppression of the inhibitory 'Ser-9' phosphorylation of GSK3B, which represses the function of the APC:CTNNB1:GSK3B complex and the interaction with CDH1/E-cadherin in adherent junctions (PubMed:25169422). Plays a role in the regulation of cell cycle and cell adhesion (PubMed:25169422, PubMed:25450365). Has an inhibitory role on AR-signaling pathway through the induction of receptor proteasomal degradation (PubMed:22155408).</text>
</comment>
<comment type="subunit">
    <text evidence="6">Interacts with the complex composed, at least, of APC, CTNNB1 and GSK3B; the interaction takes place with the inactive form of GSK3B (phosphorylated at 'Ser-9').</text>
</comment>
<comment type="interaction">
    <interactant intactId="EBI-720411">
        <id>Q9UK76</id>
    </interactant>
    <interactant intactId="EBI-718729">
        <id>P55212</id>
        <label>CASP6</label>
    </interactant>
    <organismsDiffer>false</organismsDiffer>
    <experiments>3</experiments>
</comment>
<comment type="interaction">
    <interactant intactId="EBI-720411">
        <id>Q9UK76</id>
    </interactant>
    <interactant intactId="EBI-6624398">
        <id>P06307</id>
        <label>CCK</label>
    </interactant>
    <organismsDiffer>false</organismsDiffer>
    <experiments>3</experiments>
</comment>
<comment type="interaction">
    <interactant intactId="EBI-720411">
        <id>Q9UK76</id>
    </interactant>
    <interactant intactId="EBI-473886">
        <id>O00291</id>
        <label>HIP1</label>
    </interactant>
    <organismsDiffer>false</organismsDiffer>
    <experiments>3</experiments>
</comment>
<comment type="interaction">
    <interactant intactId="EBI-720411">
        <id>Q9UK76</id>
    </interactant>
    <interactant intactId="EBI-21591415">
        <id>P13473-2</id>
        <label>LAMP2</label>
    </interactant>
    <organismsDiffer>false</organismsDiffer>
    <experiments>3</experiments>
</comment>
<comment type="interaction">
    <interactant intactId="EBI-720411">
        <id>Q9UK76</id>
    </interactant>
    <interactant intactId="EBI-9087860">
        <id>P32243-2</id>
        <label>OTX2</label>
    </interactant>
    <organismsDiffer>false</organismsDiffer>
    <experiments>3</experiments>
</comment>
<comment type="interaction">
    <interactant intactId="EBI-720411">
        <id>Q9UK76</id>
    </interactant>
    <interactant intactId="EBI-286642">
        <id>P62826</id>
        <label>RAN</label>
    </interactant>
    <organismsDiffer>false</organismsDiffer>
    <experiments>3</experiments>
</comment>
<comment type="interaction">
    <interactant intactId="EBI-720411">
        <id>Q9UK76</id>
    </interactant>
    <interactant intactId="EBI-2623095">
        <id>Q9Y371</id>
        <label>SH3GLB1</label>
    </interactant>
    <organismsDiffer>false</organismsDiffer>
    <experiments>3</experiments>
</comment>
<comment type="subcellular location">
    <subcellularLocation>
        <location evidence="4">Nucleus</location>
    </subcellularLocation>
    <subcellularLocation>
        <location evidence="6">Cytoplasm</location>
    </subcellularLocation>
</comment>
<comment type="alternative products">
    <event type="alternative splicing"/>
    <isoform>
        <id>Q9UK76-1</id>
        <name>1</name>
        <name>HN1A</name>
        <sequence type="displayed"/>
    </isoform>
    <isoform>
        <id>Q9UK76-2</id>
        <name>2</name>
        <name>HN1B</name>
        <sequence type="described" ref="VSP_017133"/>
    </isoform>
    <isoform>
        <id>Q9UK76-3</id>
        <name>3</name>
        <name>HN1C</name>
        <sequence type="described" ref="VSP_017132"/>
    </isoform>
</comment>
<comment type="tissue specificity">
    <text evidence="2">Expressed in testis, skeletal muscle, thymus, prostate, colon, peripheral blood cells, brain and placenta.</text>
</comment>
<comment type="induction">
    <text evidence="4 5 7">Induced by EGF growth factor at mRNA and protein levels (PubMed:21323578). Induced by androgens (PubMed:22155408). Negatively regulated by the microRNA miR-132 (PubMed:25450365).</text>
</comment>
<comment type="similarity">
    <text evidence="11">Belongs to the JUPITER family.</text>
</comment>
<protein>
    <recommendedName>
        <fullName evidence="12">Jupiter microtubule associated homolog 1</fullName>
    </recommendedName>
    <alternativeName>
        <fullName>Androgen-regulated protein 2</fullName>
    </alternativeName>
    <alternativeName>
        <fullName>Hematological and neurological expressed 1 protein</fullName>
    </alternativeName>
    <component>
        <recommendedName>
            <fullName>Jupiter microtubule associated homolog 1, N-terminally processed</fullName>
        </recommendedName>
    </component>
</protein>
<feature type="chain" id="PRO_0000424487" description="Jupiter microtubule associated homolog 1">
    <location>
        <begin position="1"/>
        <end position="154"/>
    </location>
</feature>
<feature type="initiator methionine" description="Removed; alternate" evidence="3 20">
    <location>
        <position position="1"/>
    </location>
</feature>
<feature type="chain" id="PRO_0000054918" description="Jupiter microtubule associated homolog 1, N-terminally processed">
    <location>
        <begin position="2"/>
        <end position="154"/>
    </location>
</feature>
<feature type="region of interest" description="Disordered" evidence="1">
    <location>
        <begin position="1"/>
        <end position="154"/>
    </location>
</feature>
<feature type="compositionally biased region" description="Polar residues" evidence="1">
    <location>
        <begin position="1"/>
        <end position="19"/>
    </location>
</feature>
<feature type="compositionally biased region" description="Polar residues" evidence="1">
    <location>
        <begin position="47"/>
        <end position="59"/>
    </location>
</feature>
<feature type="compositionally biased region" description="Low complexity" evidence="1">
    <location>
        <begin position="60"/>
        <end position="71"/>
    </location>
</feature>
<feature type="compositionally biased region" description="Polar residues" evidence="1">
    <location>
        <begin position="80"/>
        <end position="91"/>
    </location>
</feature>
<feature type="compositionally biased region" description="Basic and acidic residues" evidence="1">
    <location>
        <begin position="96"/>
        <end position="108"/>
    </location>
</feature>
<feature type="compositionally biased region" description="Pro residues" evidence="1">
    <location>
        <begin position="125"/>
        <end position="138"/>
    </location>
</feature>
<feature type="modified residue" description="N-acetylmethionine" evidence="20">
    <location>
        <position position="1"/>
    </location>
</feature>
<feature type="modified residue" description="N-acetylthreonine; in Hematological and neurological expressed 1 protein, N-terminally processed" evidence="3 20">
    <location>
        <position position="2"/>
    </location>
</feature>
<feature type="modified residue" description="Phosphoserine" evidence="21">
    <location>
        <position position="28"/>
    </location>
</feature>
<feature type="modified residue" description="Phosphoserine" evidence="21">
    <location>
        <position position="31"/>
    </location>
</feature>
<feature type="modified residue" description="Phosphothreonine" evidence="14 15 17 18 21">
    <location>
        <position position="54"/>
    </location>
</feature>
<feature type="modified residue" description="Phosphoserine" evidence="21">
    <location>
        <position position="71"/>
    </location>
</feature>
<feature type="modified residue" description="Phosphoserine" evidence="15 21">
    <location>
        <position position="80"/>
    </location>
</feature>
<feature type="modified residue" description="Phosphoserine" evidence="3 15 17 18 19 21">
    <location>
        <position position="87"/>
    </location>
</feature>
<feature type="modified residue" description="Phosphoserine" evidence="17 18 21 22">
    <location>
        <position position="88"/>
    </location>
</feature>
<feature type="modified residue" description="Phosphoserine" evidence="21">
    <location>
        <position position="92"/>
    </location>
</feature>
<feature type="modified residue" description="Phosphoserine" evidence="13 18">
    <location>
        <position position="131"/>
    </location>
</feature>
<feature type="modified residue" description="N6-acetyllysine" evidence="16">
    <location>
        <position position="148"/>
    </location>
</feature>
<feature type="splice variant" id="VSP_017132" description="In isoform 3." evidence="8 9">
    <location>
        <begin position="1"/>
        <end position="46"/>
    </location>
</feature>
<feature type="splice variant" id="VSP_017133" description="In isoform 2." evidence="8">
    <original>GEGDIHENVDTDLPGSLGQSEEKPVPAAPVPSPVAPAPVPSRRNPPGGKSSLVLG</original>
    <variation>KMWTQTCQAAWGRVKRSPCLLRLCPARWPRPQCHPEEIPLAASPASSWVSSDCPERCRSVCFLHACELHNLSLTVHLLDLFH</variation>
    <location>
        <begin position="100"/>
        <end position="154"/>
    </location>
</feature>
<feature type="sequence conflict" description="In Ref. 5; BAD97041." evidence="11" ref="5">
    <original>R</original>
    <variation>G</variation>
    <location>
        <position position="85"/>
    </location>
</feature>